<organism>
    <name type="scientific">Saccharomyces cerevisiae (strain ATCC 204508 / S288c)</name>
    <name type="common">Baker's yeast</name>
    <dbReference type="NCBI Taxonomy" id="559292"/>
    <lineage>
        <taxon>Eukaryota</taxon>
        <taxon>Fungi</taxon>
        <taxon>Dikarya</taxon>
        <taxon>Ascomycota</taxon>
        <taxon>Saccharomycotina</taxon>
        <taxon>Saccharomycetes</taxon>
        <taxon>Saccharomycetales</taxon>
        <taxon>Saccharomycetaceae</taxon>
        <taxon>Saccharomyces</taxon>
    </lineage>
</organism>
<sequence length="122" mass="14008">MKVSDRRKFEKANFDEFESALNNKNDLVHCPSITLFESIPTEVRSFYEDEKSGLIKVVKFRTGAMDRKRSFEKIVISVMVGKNVQKFLTFVEDEPDFQGGPIPSNKPRDGLHVVSSAYFEIQ</sequence>
<protein>
    <recommendedName>
        <fullName>Uncharacterized protein YER189W</fullName>
    </recommendedName>
</protein>
<feature type="chain" id="PRO_0000202665" description="Uncharacterized protein YER189W">
    <location>
        <begin position="1"/>
        <end position="122"/>
    </location>
</feature>
<reference key="1">
    <citation type="journal article" date="1997" name="Nature">
        <title>The nucleotide sequence of Saccharomyces cerevisiae chromosome V.</title>
        <authorList>
            <person name="Dietrich F.S."/>
            <person name="Mulligan J.T."/>
            <person name="Hennessy K.M."/>
            <person name="Yelton M.A."/>
            <person name="Allen E."/>
            <person name="Araujo R."/>
            <person name="Aviles E."/>
            <person name="Berno A."/>
            <person name="Brennan T."/>
            <person name="Carpenter J."/>
            <person name="Chen E."/>
            <person name="Cherry J.M."/>
            <person name="Chung E."/>
            <person name="Duncan M."/>
            <person name="Guzman E."/>
            <person name="Hartzell G."/>
            <person name="Hunicke-Smith S."/>
            <person name="Hyman R.W."/>
            <person name="Kayser A."/>
            <person name="Komp C."/>
            <person name="Lashkari D."/>
            <person name="Lew H."/>
            <person name="Lin D."/>
            <person name="Mosedale D."/>
            <person name="Nakahara K."/>
            <person name="Namath A."/>
            <person name="Norgren R."/>
            <person name="Oefner P."/>
            <person name="Oh C."/>
            <person name="Petel F.X."/>
            <person name="Roberts D."/>
            <person name="Sehl P."/>
            <person name="Schramm S."/>
            <person name="Shogren T."/>
            <person name="Smith V."/>
            <person name="Taylor P."/>
            <person name="Wei Y."/>
            <person name="Botstein D."/>
            <person name="Davis R.W."/>
        </authorList>
    </citation>
    <scope>NUCLEOTIDE SEQUENCE [LARGE SCALE GENOMIC DNA]</scope>
    <source>
        <strain>ATCC 204508 / S288c</strain>
    </source>
</reference>
<reference key="2">
    <citation type="journal article" date="2014" name="G3 (Bethesda)">
        <title>The reference genome sequence of Saccharomyces cerevisiae: Then and now.</title>
        <authorList>
            <person name="Engel S.R."/>
            <person name="Dietrich F.S."/>
            <person name="Fisk D.G."/>
            <person name="Binkley G."/>
            <person name="Balakrishnan R."/>
            <person name="Costanzo M.C."/>
            <person name="Dwight S.S."/>
            <person name="Hitz B.C."/>
            <person name="Karra K."/>
            <person name="Nash R.S."/>
            <person name="Weng S."/>
            <person name="Wong E.D."/>
            <person name="Lloyd P."/>
            <person name="Skrzypek M.S."/>
            <person name="Miyasato S.R."/>
            <person name="Simison M."/>
            <person name="Cherry J.M."/>
        </authorList>
    </citation>
    <scope>GENOME REANNOTATION</scope>
    <source>
        <strain>ATCC 204508 / S288c</strain>
    </source>
</reference>
<keyword id="KW-1185">Reference proteome</keyword>
<name>YE19_YEAST</name>
<dbReference type="EMBL" id="U18922">
    <property type="protein sequence ID" value="AAB64716.1"/>
    <property type="molecule type" value="Genomic_DNA"/>
</dbReference>
<dbReference type="EMBL" id="BK006939">
    <property type="protein sequence ID" value="DAA07852.1"/>
    <property type="molecule type" value="Genomic_DNA"/>
</dbReference>
<dbReference type="RefSeq" id="NP_011116.3">
    <property type="nucleotide sequence ID" value="NM_001179079.3"/>
</dbReference>
<dbReference type="BioGRID" id="36942">
    <property type="interactions" value="25"/>
</dbReference>
<dbReference type="DIP" id="DIP-4979N"/>
<dbReference type="FunCoup" id="P40104">
    <property type="interactions" value="41"/>
</dbReference>
<dbReference type="IntAct" id="P40104">
    <property type="interactions" value="1"/>
</dbReference>
<dbReference type="STRING" id="4932.YER189W"/>
<dbReference type="PaxDb" id="4932-YER189W"/>
<dbReference type="PeptideAtlas" id="P40104"/>
<dbReference type="EnsemblFungi" id="YER189W_mRNA">
    <property type="protein sequence ID" value="YER189W"/>
    <property type="gene ID" value="YER189W"/>
</dbReference>
<dbReference type="GeneID" id="856939"/>
<dbReference type="KEGG" id="sce:YER189W"/>
<dbReference type="AGR" id="SGD:S000000991"/>
<dbReference type="SGD" id="S000000991">
    <property type="gene designation" value="YER189W"/>
</dbReference>
<dbReference type="VEuPathDB" id="FungiDB:YER189W"/>
<dbReference type="GeneTree" id="ENSGT00940000153173"/>
<dbReference type="HOGENOM" id="CLU_2122975_0_0_1"/>
<dbReference type="InParanoid" id="P40104"/>
<dbReference type="OrthoDB" id="4044474at2759"/>
<dbReference type="BioCyc" id="YEAST:G3O-30344-MONOMER"/>
<dbReference type="PRO" id="PR:P40104"/>
<dbReference type="Proteomes" id="UP000002311">
    <property type="component" value="Chromosome V"/>
</dbReference>
<dbReference type="RNAct" id="P40104">
    <property type="molecule type" value="protein"/>
</dbReference>
<dbReference type="InterPro" id="IPR021646">
    <property type="entry name" value="Sir1_ORC-binding"/>
</dbReference>
<dbReference type="InterPro" id="IPR050978">
    <property type="entry name" value="Y'_ATP-dependent_helicase"/>
</dbReference>
<dbReference type="PANTHER" id="PTHR31583">
    <property type="match status" value="1"/>
</dbReference>
<dbReference type="PANTHER" id="PTHR31583:SF2">
    <property type="match status" value="1"/>
</dbReference>
<dbReference type="Pfam" id="PF11603">
    <property type="entry name" value="Sir1"/>
    <property type="match status" value="1"/>
</dbReference>
<gene>
    <name type="ordered locus">YER189W</name>
</gene>
<accession>P40104</accession>
<accession>D3DM98</accession>
<proteinExistence type="predicted"/>